<proteinExistence type="inferred from homology"/>
<gene>
    <name type="ordered locus">At5g32619</name>
    <name type="ORF">F15I15</name>
</gene>
<sequence>MAIKKFSSLLLPLLMVLALVVLPIISGRTQEHPCQDYRLGCKSRDVCNAKCLSLGYVKGGDCVTFAFPICCCKINFGFQDDSPISSPIFTD</sequence>
<protein>
    <recommendedName>
        <fullName>Defensin-like protein 82</fullName>
    </recommendedName>
</protein>
<evidence type="ECO:0000250" key="1"/>
<evidence type="ECO:0000255" key="2"/>
<evidence type="ECO:0000305" key="3"/>
<accession>Q2V334</accession>
<comment type="subcellular location">
    <subcellularLocation>
        <location evidence="1">Secreted</location>
    </subcellularLocation>
</comment>
<comment type="similarity">
    <text evidence="3">Belongs to the DEFL family.</text>
</comment>
<dbReference type="EMBL" id="AF296826">
    <property type="status" value="NOT_ANNOTATED_CDS"/>
    <property type="molecule type" value="Genomic_DNA"/>
</dbReference>
<dbReference type="EMBL" id="CP002688">
    <property type="protein sequence ID" value="AED93888.1"/>
    <property type="molecule type" value="Genomic_DNA"/>
</dbReference>
<dbReference type="EMBL" id="BX833584">
    <property type="status" value="NOT_ANNOTATED_CDS"/>
    <property type="molecule type" value="mRNA"/>
</dbReference>
<dbReference type="RefSeq" id="NP_001031965.1">
    <property type="nucleotide sequence ID" value="NM_001036888.2"/>
</dbReference>
<dbReference type="PaxDb" id="3702-AT5G32619.1"/>
<dbReference type="ProteomicsDB" id="224182"/>
<dbReference type="EnsemblPlants" id="AT5G32619.1">
    <property type="protein sequence ID" value="AT5G32619.1"/>
    <property type="gene ID" value="AT5G32619"/>
</dbReference>
<dbReference type="GeneID" id="3771072"/>
<dbReference type="Gramene" id="AT5G32619.1">
    <property type="protein sequence ID" value="AT5G32619.1"/>
    <property type="gene ID" value="AT5G32619"/>
</dbReference>
<dbReference type="KEGG" id="ath:AT5G32619"/>
<dbReference type="Araport" id="AT5G32619"/>
<dbReference type="TAIR" id="AT5G32619"/>
<dbReference type="HOGENOM" id="CLU_180308_0_1_1"/>
<dbReference type="InParanoid" id="Q2V334"/>
<dbReference type="OMA" id="ISGVYCT"/>
<dbReference type="PRO" id="PR:Q2V334"/>
<dbReference type="Proteomes" id="UP000006548">
    <property type="component" value="Chromosome 5"/>
</dbReference>
<dbReference type="ExpressionAtlas" id="Q2V334">
    <property type="expression patterns" value="baseline and differential"/>
</dbReference>
<dbReference type="GO" id="GO:0005576">
    <property type="term" value="C:extracellular region"/>
    <property type="evidence" value="ECO:0007669"/>
    <property type="project" value="UniProtKB-SubCell"/>
</dbReference>
<dbReference type="GO" id="GO:0050832">
    <property type="term" value="P:defense response to fungus"/>
    <property type="evidence" value="ECO:0007669"/>
    <property type="project" value="UniProtKB-KW"/>
</dbReference>
<dbReference type="GO" id="GO:0031640">
    <property type="term" value="P:killing of cells of another organism"/>
    <property type="evidence" value="ECO:0007669"/>
    <property type="project" value="UniProtKB-KW"/>
</dbReference>
<reference key="1">
    <citation type="journal article" date="2000" name="Nature">
        <title>Sequence and analysis of chromosome 5 of the plant Arabidopsis thaliana.</title>
        <authorList>
            <person name="Tabata S."/>
            <person name="Kaneko T."/>
            <person name="Nakamura Y."/>
            <person name="Kotani H."/>
            <person name="Kato T."/>
            <person name="Asamizu E."/>
            <person name="Miyajima N."/>
            <person name="Sasamoto S."/>
            <person name="Kimura T."/>
            <person name="Hosouchi T."/>
            <person name="Kawashima K."/>
            <person name="Kohara M."/>
            <person name="Matsumoto M."/>
            <person name="Matsuno A."/>
            <person name="Muraki A."/>
            <person name="Nakayama S."/>
            <person name="Nakazaki N."/>
            <person name="Naruo K."/>
            <person name="Okumura S."/>
            <person name="Shinpo S."/>
            <person name="Takeuchi C."/>
            <person name="Wada T."/>
            <person name="Watanabe A."/>
            <person name="Yamada M."/>
            <person name="Yasuda M."/>
            <person name="Sato S."/>
            <person name="de la Bastide M."/>
            <person name="Huang E."/>
            <person name="Spiegel L."/>
            <person name="Gnoj L."/>
            <person name="O'Shaughnessy A."/>
            <person name="Preston R."/>
            <person name="Habermann K."/>
            <person name="Murray J."/>
            <person name="Johnson D."/>
            <person name="Rohlfing T."/>
            <person name="Nelson J."/>
            <person name="Stoneking T."/>
            <person name="Pepin K."/>
            <person name="Spieth J."/>
            <person name="Sekhon M."/>
            <person name="Armstrong J."/>
            <person name="Becker M."/>
            <person name="Belter E."/>
            <person name="Cordum H."/>
            <person name="Cordes M."/>
            <person name="Courtney L."/>
            <person name="Courtney W."/>
            <person name="Dante M."/>
            <person name="Du H."/>
            <person name="Edwards J."/>
            <person name="Fryman J."/>
            <person name="Haakensen B."/>
            <person name="Lamar E."/>
            <person name="Latreille P."/>
            <person name="Leonard S."/>
            <person name="Meyer R."/>
            <person name="Mulvaney E."/>
            <person name="Ozersky P."/>
            <person name="Riley A."/>
            <person name="Strowmatt C."/>
            <person name="Wagner-McPherson C."/>
            <person name="Wollam A."/>
            <person name="Yoakum M."/>
            <person name="Bell M."/>
            <person name="Dedhia N."/>
            <person name="Parnell L."/>
            <person name="Shah R."/>
            <person name="Rodriguez M."/>
            <person name="Hoon See L."/>
            <person name="Vil D."/>
            <person name="Baker J."/>
            <person name="Kirchoff K."/>
            <person name="Toth K."/>
            <person name="King L."/>
            <person name="Bahret A."/>
            <person name="Miller B."/>
            <person name="Marra M.A."/>
            <person name="Martienssen R."/>
            <person name="McCombie W.R."/>
            <person name="Wilson R.K."/>
            <person name="Murphy G."/>
            <person name="Bancroft I."/>
            <person name="Volckaert G."/>
            <person name="Wambutt R."/>
            <person name="Duesterhoeft A."/>
            <person name="Stiekema W."/>
            <person name="Pohl T."/>
            <person name="Entian K.-D."/>
            <person name="Terryn N."/>
            <person name="Hartley N."/>
            <person name="Bent E."/>
            <person name="Johnson S."/>
            <person name="Langham S.-A."/>
            <person name="McCullagh B."/>
            <person name="Robben J."/>
            <person name="Grymonprez B."/>
            <person name="Zimmermann W."/>
            <person name="Ramsperger U."/>
            <person name="Wedler H."/>
            <person name="Balke K."/>
            <person name="Wedler E."/>
            <person name="Peters S."/>
            <person name="van Staveren M."/>
            <person name="Dirkse W."/>
            <person name="Mooijman P."/>
            <person name="Klein Lankhorst R."/>
            <person name="Weitzenegger T."/>
            <person name="Bothe G."/>
            <person name="Rose M."/>
            <person name="Hauf J."/>
            <person name="Berneiser S."/>
            <person name="Hempel S."/>
            <person name="Feldpausch M."/>
            <person name="Lamberth S."/>
            <person name="Villarroel R."/>
            <person name="Gielen J."/>
            <person name="Ardiles W."/>
            <person name="Bents O."/>
            <person name="Lemcke K."/>
            <person name="Kolesov G."/>
            <person name="Mayer K.F.X."/>
            <person name="Rudd S."/>
            <person name="Schoof H."/>
            <person name="Schueller C."/>
            <person name="Zaccaria P."/>
            <person name="Mewes H.-W."/>
            <person name="Bevan M."/>
            <person name="Fransz P.F."/>
        </authorList>
    </citation>
    <scope>NUCLEOTIDE SEQUENCE [LARGE SCALE GENOMIC DNA]</scope>
    <source>
        <strain>cv. Columbia</strain>
    </source>
</reference>
<reference key="2">
    <citation type="journal article" date="2017" name="Plant J.">
        <title>Araport11: a complete reannotation of the Arabidopsis thaliana reference genome.</title>
        <authorList>
            <person name="Cheng C.Y."/>
            <person name="Krishnakumar V."/>
            <person name="Chan A.P."/>
            <person name="Thibaud-Nissen F."/>
            <person name="Schobel S."/>
            <person name="Town C.D."/>
        </authorList>
    </citation>
    <scope>GENOME REANNOTATION</scope>
    <source>
        <strain>cv. Columbia</strain>
    </source>
</reference>
<reference key="3">
    <citation type="journal article" date="2004" name="Genome Res.">
        <title>Whole genome sequence comparisons and 'full-length' cDNA sequences: a combined approach to evaluate and improve Arabidopsis genome annotation.</title>
        <authorList>
            <person name="Castelli V."/>
            <person name="Aury J.-M."/>
            <person name="Jaillon O."/>
            <person name="Wincker P."/>
            <person name="Clepet C."/>
            <person name="Menard M."/>
            <person name="Cruaud C."/>
            <person name="Quetier F."/>
            <person name="Scarpelli C."/>
            <person name="Schaechter V."/>
            <person name="Temple G."/>
            <person name="Caboche M."/>
            <person name="Weissenbach J."/>
            <person name="Salanoubat M."/>
        </authorList>
    </citation>
    <scope>NUCLEOTIDE SEQUENCE [LARGE SCALE MRNA] OF 7-91</scope>
    <source>
        <strain>cv. Columbia</strain>
    </source>
</reference>
<reference key="4">
    <citation type="journal article" date="2005" name="Plant Physiol.">
        <title>Genome organization of more than 300 defensin-like genes in Arabidopsis.</title>
        <authorList>
            <person name="Silverstein K.A.T."/>
            <person name="Graham M.A."/>
            <person name="Paape T.D."/>
            <person name="VandenBosch K.A."/>
        </authorList>
    </citation>
    <scope>GENE FAMILY</scope>
</reference>
<organism>
    <name type="scientific">Arabidopsis thaliana</name>
    <name type="common">Mouse-ear cress</name>
    <dbReference type="NCBI Taxonomy" id="3702"/>
    <lineage>
        <taxon>Eukaryota</taxon>
        <taxon>Viridiplantae</taxon>
        <taxon>Streptophyta</taxon>
        <taxon>Embryophyta</taxon>
        <taxon>Tracheophyta</taxon>
        <taxon>Spermatophyta</taxon>
        <taxon>Magnoliopsida</taxon>
        <taxon>eudicotyledons</taxon>
        <taxon>Gunneridae</taxon>
        <taxon>Pentapetalae</taxon>
        <taxon>rosids</taxon>
        <taxon>malvids</taxon>
        <taxon>Brassicales</taxon>
        <taxon>Brassicaceae</taxon>
        <taxon>Camelineae</taxon>
        <taxon>Arabidopsis</taxon>
    </lineage>
</organism>
<name>DEF82_ARATH</name>
<keyword id="KW-0929">Antimicrobial</keyword>
<keyword id="KW-1015">Disulfide bond</keyword>
<keyword id="KW-0295">Fungicide</keyword>
<keyword id="KW-0611">Plant defense</keyword>
<keyword id="KW-1185">Reference proteome</keyword>
<keyword id="KW-0964">Secreted</keyword>
<keyword id="KW-0732">Signal</keyword>
<feature type="signal peptide" evidence="2">
    <location>
        <begin position="1"/>
        <end position="27"/>
    </location>
</feature>
<feature type="chain" id="PRO_0000379652" description="Defensin-like protein 82">
    <location>
        <begin position="28"/>
        <end position="91"/>
    </location>
</feature>
<feature type="disulfide bond" evidence="1">
    <location>
        <begin position="34"/>
        <end position="72"/>
    </location>
</feature>
<feature type="disulfide bond" evidence="1">
    <location>
        <begin position="41"/>
        <end position="62"/>
    </location>
</feature>
<feature type="disulfide bond" evidence="1">
    <location>
        <begin position="47"/>
        <end position="70"/>
    </location>
</feature>
<feature type="disulfide bond" evidence="1">
    <location>
        <begin position="51"/>
        <end position="71"/>
    </location>
</feature>